<proteinExistence type="inferred from homology"/>
<keyword id="KW-0028">Amino-acid biosynthesis</keyword>
<keyword id="KW-0032">Aminotransferase</keyword>
<keyword id="KW-0368">Histidine biosynthesis</keyword>
<keyword id="KW-0663">Pyridoxal phosphate</keyword>
<keyword id="KW-1185">Reference proteome</keyword>
<keyword id="KW-0808">Transferase</keyword>
<comment type="catalytic activity">
    <reaction evidence="1">
        <text>L-histidinol phosphate + 2-oxoglutarate = 3-(imidazol-4-yl)-2-oxopropyl phosphate + L-glutamate</text>
        <dbReference type="Rhea" id="RHEA:23744"/>
        <dbReference type="ChEBI" id="CHEBI:16810"/>
        <dbReference type="ChEBI" id="CHEBI:29985"/>
        <dbReference type="ChEBI" id="CHEBI:57766"/>
        <dbReference type="ChEBI" id="CHEBI:57980"/>
        <dbReference type="EC" id="2.6.1.9"/>
    </reaction>
</comment>
<comment type="cofactor">
    <cofactor evidence="1">
        <name>pyridoxal 5'-phosphate</name>
        <dbReference type="ChEBI" id="CHEBI:597326"/>
    </cofactor>
</comment>
<comment type="pathway">
    <text evidence="1">Amino-acid biosynthesis; L-histidine biosynthesis; L-histidine from 5-phospho-alpha-D-ribose 1-diphosphate: step 7/9.</text>
</comment>
<comment type="subunit">
    <text evidence="1">Homodimer.</text>
</comment>
<comment type="similarity">
    <text evidence="1">Belongs to the class-II pyridoxal-phosphate-dependent aminotransferase family. Histidinol-phosphate aminotransferase subfamily.</text>
</comment>
<protein>
    <recommendedName>
        <fullName evidence="1">Histidinol-phosphate aminotransferase 1</fullName>
        <ecNumber evidence="1">2.6.1.9</ecNumber>
    </recommendedName>
    <alternativeName>
        <fullName evidence="1">Imidazole acetol-phosphate transaminase 1</fullName>
    </alternativeName>
</protein>
<sequence>MSRYWSDIVRQLEPYVPGEQPALAHPVKLNTNENPYPPSPRALDAIRRELGDTGEALRRYPDPVARRLRETVAAYHGIAPEQVFAGNGSDEVLAHAFQALLQHDRPLRFPDITYSFYPTYARLYRVAYETVPLADDFSIVVDDYLDDAGCVLFPNPNAPTGRALPLADIERIVAANPSSVVVIDEAYVDFGAESAVSLIARYPNLLVVHTVSKARSLAGMRVGFAFGDAALIDALTRVKDSFNSYPLDRLAQVATQASYEDEAWFQATRKQVIASRERLVGALAALGFDVVPSAANFVFARPRSHDAATLAAQLKQREIFVRHFKLPRIDQHLRITVGSDAECDALVAALRELLAA</sequence>
<dbReference type="EC" id="2.6.1.9" evidence="1"/>
<dbReference type="EMBL" id="BX571965">
    <property type="protein sequence ID" value="CAH34508.1"/>
    <property type="molecule type" value="Genomic_DNA"/>
</dbReference>
<dbReference type="RefSeq" id="YP_107144.1">
    <property type="nucleotide sequence ID" value="NC_006350.1"/>
</dbReference>
<dbReference type="SMR" id="Q63XM1"/>
<dbReference type="STRING" id="272560.BPSL0518"/>
<dbReference type="KEGG" id="bps:BPSL0518"/>
<dbReference type="PATRIC" id="fig|272560.51.peg.1129"/>
<dbReference type="eggNOG" id="COG0079">
    <property type="taxonomic scope" value="Bacteria"/>
</dbReference>
<dbReference type="UniPathway" id="UPA00031">
    <property type="reaction ID" value="UER00012"/>
</dbReference>
<dbReference type="Proteomes" id="UP000000605">
    <property type="component" value="Chromosome 1"/>
</dbReference>
<dbReference type="GO" id="GO:0004400">
    <property type="term" value="F:histidinol-phosphate transaminase activity"/>
    <property type="evidence" value="ECO:0007669"/>
    <property type="project" value="UniProtKB-UniRule"/>
</dbReference>
<dbReference type="GO" id="GO:0030170">
    <property type="term" value="F:pyridoxal phosphate binding"/>
    <property type="evidence" value="ECO:0007669"/>
    <property type="project" value="InterPro"/>
</dbReference>
<dbReference type="GO" id="GO:0000105">
    <property type="term" value="P:L-histidine biosynthetic process"/>
    <property type="evidence" value="ECO:0007669"/>
    <property type="project" value="UniProtKB-UniRule"/>
</dbReference>
<dbReference type="CDD" id="cd00609">
    <property type="entry name" value="AAT_like"/>
    <property type="match status" value="1"/>
</dbReference>
<dbReference type="Gene3D" id="3.90.1150.10">
    <property type="entry name" value="Aspartate Aminotransferase, domain 1"/>
    <property type="match status" value="1"/>
</dbReference>
<dbReference type="Gene3D" id="3.40.640.10">
    <property type="entry name" value="Type I PLP-dependent aspartate aminotransferase-like (Major domain)"/>
    <property type="match status" value="1"/>
</dbReference>
<dbReference type="HAMAP" id="MF_01023">
    <property type="entry name" value="HisC_aminotrans_2"/>
    <property type="match status" value="1"/>
</dbReference>
<dbReference type="InterPro" id="IPR001917">
    <property type="entry name" value="Aminotrans_II_pyridoxalP_BS"/>
</dbReference>
<dbReference type="InterPro" id="IPR004839">
    <property type="entry name" value="Aminotransferase_I/II_large"/>
</dbReference>
<dbReference type="InterPro" id="IPR005861">
    <property type="entry name" value="HisP_aminotrans"/>
</dbReference>
<dbReference type="InterPro" id="IPR015424">
    <property type="entry name" value="PyrdxlP-dep_Trfase"/>
</dbReference>
<dbReference type="InterPro" id="IPR015421">
    <property type="entry name" value="PyrdxlP-dep_Trfase_major"/>
</dbReference>
<dbReference type="InterPro" id="IPR015422">
    <property type="entry name" value="PyrdxlP-dep_Trfase_small"/>
</dbReference>
<dbReference type="NCBIfam" id="TIGR01141">
    <property type="entry name" value="hisC"/>
    <property type="match status" value="1"/>
</dbReference>
<dbReference type="PANTHER" id="PTHR42885:SF2">
    <property type="entry name" value="HISTIDINOL-PHOSPHATE AMINOTRANSFERASE"/>
    <property type="match status" value="1"/>
</dbReference>
<dbReference type="PANTHER" id="PTHR42885">
    <property type="entry name" value="HISTIDINOL-PHOSPHATE AMINOTRANSFERASE-RELATED"/>
    <property type="match status" value="1"/>
</dbReference>
<dbReference type="Pfam" id="PF00155">
    <property type="entry name" value="Aminotran_1_2"/>
    <property type="match status" value="1"/>
</dbReference>
<dbReference type="SUPFAM" id="SSF53383">
    <property type="entry name" value="PLP-dependent transferases"/>
    <property type="match status" value="1"/>
</dbReference>
<dbReference type="PROSITE" id="PS00599">
    <property type="entry name" value="AA_TRANSFER_CLASS_2"/>
    <property type="match status" value="1"/>
</dbReference>
<feature type="chain" id="PRO_0000153338" description="Histidinol-phosphate aminotransferase 1">
    <location>
        <begin position="1"/>
        <end position="356"/>
    </location>
</feature>
<feature type="modified residue" description="N6-(pyridoxal phosphate)lysine" evidence="1">
    <location>
        <position position="213"/>
    </location>
</feature>
<accession>Q63XM1</accession>
<gene>
    <name evidence="1" type="primary">hisC1</name>
    <name type="ordered locus">BPSL0518</name>
</gene>
<organism>
    <name type="scientific">Burkholderia pseudomallei (strain K96243)</name>
    <dbReference type="NCBI Taxonomy" id="272560"/>
    <lineage>
        <taxon>Bacteria</taxon>
        <taxon>Pseudomonadati</taxon>
        <taxon>Pseudomonadota</taxon>
        <taxon>Betaproteobacteria</taxon>
        <taxon>Burkholderiales</taxon>
        <taxon>Burkholderiaceae</taxon>
        <taxon>Burkholderia</taxon>
        <taxon>pseudomallei group</taxon>
    </lineage>
</organism>
<reference key="1">
    <citation type="journal article" date="2004" name="Proc. Natl. Acad. Sci. U.S.A.">
        <title>Genomic plasticity of the causative agent of melioidosis, Burkholderia pseudomallei.</title>
        <authorList>
            <person name="Holden M.T.G."/>
            <person name="Titball R.W."/>
            <person name="Peacock S.J."/>
            <person name="Cerdeno-Tarraga A.-M."/>
            <person name="Atkins T."/>
            <person name="Crossman L.C."/>
            <person name="Pitt T."/>
            <person name="Churcher C."/>
            <person name="Mungall K.L."/>
            <person name="Bentley S.D."/>
            <person name="Sebaihia M."/>
            <person name="Thomson N.R."/>
            <person name="Bason N."/>
            <person name="Beacham I.R."/>
            <person name="Brooks K."/>
            <person name="Brown K.A."/>
            <person name="Brown N.F."/>
            <person name="Challis G.L."/>
            <person name="Cherevach I."/>
            <person name="Chillingworth T."/>
            <person name="Cronin A."/>
            <person name="Crossett B."/>
            <person name="Davis P."/>
            <person name="DeShazer D."/>
            <person name="Feltwell T."/>
            <person name="Fraser A."/>
            <person name="Hance Z."/>
            <person name="Hauser H."/>
            <person name="Holroyd S."/>
            <person name="Jagels K."/>
            <person name="Keith K.E."/>
            <person name="Maddison M."/>
            <person name="Moule S."/>
            <person name="Price C."/>
            <person name="Quail M.A."/>
            <person name="Rabbinowitsch E."/>
            <person name="Rutherford K."/>
            <person name="Sanders M."/>
            <person name="Simmonds M."/>
            <person name="Songsivilai S."/>
            <person name="Stevens K."/>
            <person name="Tumapa S."/>
            <person name="Vesaratchavest M."/>
            <person name="Whitehead S."/>
            <person name="Yeats C."/>
            <person name="Barrell B.G."/>
            <person name="Oyston P.C.F."/>
            <person name="Parkhill J."/>
        </authorList>
    </citation>
    <scope>NUCLEOTIDE SEQUENCE [LARGE SCALE GENOMIC DNA]</scope>
    <source>
        <strain>K96243</strain>
    </source>
</reference>
<name>HIS81_BURPS</name>
<evidence type="ECO:0000255" key="1">
    <source>
        <dbReference type="HAMAP-Rule" id="MF_01023"/>
    </source>
</evidence>